<protein>
    <recommendedName>
        <fullName>Uncharacterized protein MJ0727</fullName>
    </recommendedName>
</protein>
<organism>
    <name type="scientific">Methanocaldococcus jannaschii (strain ATCC 43067 / DSM 2661 / JAL-1 / JCM 10045 / NBRC 100440)</name>
    <name type="common">Methanococcus jannaschii</name>
    <dbReference type="NCBI Taxonomy" id="243232"/>
    <lineage>
        <taxon>Archaea</taxon>
        <taxon>Methanobacteriati</taxon>
        <taxon>Methanobacteriota</taxon>
        <taxon>Methanomada group</taxon>
        <taxon>Methanococci</taxon>
        <taxon>Methanococcales</taxon>
        <taxon>Methanocaldococcaceae</taxon>
        <taxon>Methanocaldococcus</taxon>
    </lineage>
</organism>
<dbReference type="EMBL" id="L77117">
    <property type="protein sequence ID" value="AAB98723.1"/>
    <property type="molecule type" value="Genomic_DNA"/>
</dbReference>
<dbReference type="PIR" id="G64390">
    <property type="entry name" value="G64390"/>
</dbReference>
<dbReference type="RefSeq" id="WP_010870232.1">
    <property type="nucleotide sequence ID" value="NC_000909.1"/>
</dbReference>
<dbReference type="SMR" id="Q58137"/>
<dbReference type="STRING" id="243232.MJ_0727"/>
<dbReference type="PaxDb" id="243232-MJ_0727"/>
<dbReference type="EnsemblBacteria" id="AAB98723">
    <property type="protein sequence ID" value="AAB98723"/>
    <property type="gene ID" value="MJ_0727"/>
</dbReference>
<dbReference type="GeneID" id="1451604"/>
<dbReference type="KEGG" id="mja:MJ_0727"/>
<dbReference type="eggNOG" id="arCOG01549">
    <property type="taxonomic scope" value="Archaea"/>
</dbReference>
<dbReference type="HOGENOM" id="CLU_932593_0_0_2"/>
<dbReference type="InParanoid" id="Q58137"/>
<dbReference type="OrthoDB" id="65136at2157"/>
<dbReference type="PhylomeDB" id="Q58137"/>
<dbReference type="Proteomes" id="UP000000805">
    <property type="component" value="Chromosome"/>
</dbReference>
<dbReference type="GO" id="GO:0016151">
    <property type="term" value="F:nickel cation binding"/>
    <property type="evidence" value="ECO:0007669"/>
    <property type="project" value="InterPro"/>
</dbReference>
<dbReference type="Gene3D" id="1.10.645.10">
    <property type="entry name" value="Cytochrome-c3 Hydrogenase, chain B"/>
    <property type="match status" value="1"/>
</dbReference>
<dbReference type="InterPro" id="IPR001501">
    <property type="entry name" value="Ni-dep_hyd_lsu"/>
</dbReference>
<dbReference type="InterPro" id="IPR029014">
    <property type="entry name" value="NiFe-Hase_large"/>
</dbReference>
<dbReference type="PANTHER" id="PTHR43600:SF1">
    <property type="entry name" value="COENZYME F420 HYDROGENASE SUBUNIT ALPHA"/>
    <property type="match status" value="1"/>
</dbReference>
<dbReference type="PANTHER" id="PTHR43600">
    <property type="entry name" value="COENZYME F420 HYDROGENASE, SUBUNIT ALPHA"/>
    <property type="match status" value="1"/>
</dbReference>
<dbReference type="Pfam" id="PF00374">
    <property type="entry name" value="NiFeSe_Hases"/>
    <property type="match status" value="1"/>
</dbReference>
<dbReference type="SUPFAM" id="SSF56762">
    <property type="entry name" value="HydB/Nqo4-like"/>
    <property type="match status" value="1"/>
</dbReference>
<accession>Q58137</accession>
<proteinExistence type="predicted"/>
<sequence>MKIRGFESSMMGKDIDFIPPAMTRLCCLNEISHALAGVMAVEKAYNITVPNEGQYLREIARLGEIVEVDAIKLREFKNTDDLADIGNKIKSVLGKKAKYLAVGGVLENISDKRKEKLINLAKEGLNLVDKDFVKLVDERKAKIPLPDVELIDAYNFDANKVETNGLPKTALYDGKVVYSGSLARMYKEGLINSKNLWDVLSSRMIEIEFCLNKIIELLNKLKLTHPYMEPIIKDGKAIGEAVIEGGEGIVYHKVELLGREILDYTILTSENFNKAVLDSVDNDEAKRIIQLCERCYYL</sequence>
<name>Y727_METJA</name>
<gene>
    <name type="ordered locus">MJ0727</name>
</gene>
<keyword id="KW-1185">Reference proteome</keyword>
<reference key="1">
    <citation type="journal article" date="1996" name="Science">
        <title>Complete genome sequence of the methanogenic archaeon, Methanococcus jannaschii.</title>
        <authorList>
            <person name="Bult C.J."/>
            <person name="White O."/>
            <person name="Olsen G.J."/>
            <person name="Zhou L."/>
            <person name="Fleischmann R.D."/>
            <person name="Sutton G.G."/>
            <person name="Blake J.A."/>
            <person name="FitzGerald L.M."/>
            <person name="Clayton R.A."/>
            <person name="Gocayne J.D."/>
            <person name="Kerlavage A.R."/>
            <person name="Dougherty B.A."/>
            <person name="Tomb J.-F."/>
            <person name="Adams M.D."/>
            <person name="Reich C.I."/>
            <person name="Overbeek R."/>
            <person name="Kirkness E.F."/>
            <person name="Weinstock K.G."/>
            <person name="Merrick J.M."/>
            <person name="Glodek A."/>
            <person name="Scott J.L."/>
            <person name="Geoghagen N.S.M."/>
            <person name="Weidman J.F."/>
            <person name="Fuhrmann J.L."/>
            <person name="Nguyen D."/>
            <person name="Utterback T.R."/>
            <person name="Kelley J.M."/>
            <person name="Peterson J.D."/>
            <person name="Sadow P.W."/>
            <person name="Hanna M.C."/>
            <person name="Cotton M.D."/>
            <person name="Roberts K.M."/>
            <person name="Hurst M.A."/>
            <person name="Kaine B.P."/>
            <person name="Borodovsky M."/>
            <person name="Klenk H.-P."/>
            <person name="Fraser C.M."/>
            <person name="Smith H.O."/>
            <person name="Woese C.R."/>
            <person name="Venter J.C."/>
        </authorList>
    </citation>
    <scope>NUCLEOTIDE SEQUENCE [LARGE SCALE GENOMIC DNA]</scope>
    <source>
        <strain>ATCC 43067 / DSM 2661 / JAL-1 / JCM 10045 / NBRC 100440</strain>
    </source>
</reference>
<feature type="chain" id="PRO_0000107004" description="Uncharacterized protein MJ0727">
    <location>
        <begin position="1"/>
        <end position="298"/>
    </location>
</feature>